<keyword id="KW-0414">Isoprene biosynthesis</keyword>
<keyword id="KW-0464">Manganese</keyword>
<keyword id="KW-0479">Metal-binding</keyword>
<keyword id="KW-0521">NADP</keyword>
<keyword id="KW-0560">Oxidoreductase</keyword>
<dbReference type="EC" id="1.1.1.267" evidence="1"/>
<dbReference type="EMBL" id="AM999887">
    <property type="protein sequence ID" value="CAQ54221.1"/>
    <property type="molecule type" value="Genomic_DNA"/>
</dbReference>
<dbReference type="RefSeq" id="WP_007302736.1">
    <property type="nucleotide sequence ID" value="NC_010981.1"/>
</dbReference>
<dbReference type="SMR" id="B3CN89"/>
<dbReference type="KEGG" id="wpi:WP0113"/>
<dbReference type="eggNOG" id="COG0743">
    <property type="taxonomic scope" value="Bacteria"/>
</dbReference>
<dbReference type="HOGENOM" id="CLU_035714_4_0_5"/>
<dbReference type="UniPathway" id="UPA00056">
    <property type="reaction ID" value="UER00092"/>
</dbReference>
<dbReference type="Proteomes" id="UP000008814">
    <property type="component" value="Chromosome"/>
</dbReference>
<dbReference type="GO" id="GO:0030604">
    <property type="term" value="F:1-deoxy-D-xylulose-5-phosphate reductoisomerase activity"/>
    <property type="evidence" value="ECO:0007669"/>
    <property type="project" value="UniProtKB-UniRule"/>
</dbReference>
<dbReference type="GO" id="GO:0030145">
    <property type="term" value="F:manganese ion binding"/>
    <property type="evidence" value="ECO:0007669"/>
    <property type="project" value="TreeGrafter"/>
</dbReference>
<dbReference type="GO" id="GO:0070402">
    <property type="term" value="F:NADPH binding"/>
    <property type="evidence" value="ECO:0007669"/>
    <property type="project" value="InterPro"/>
</dbReference>
<dbReference type="GO" id="GO:0051484">
    <property type="term" value="P:isopentenyl diphosphate biosynthetic process, methylerythritol 4-phosphate pathway involved in terpenoid biosynthetic process"/>
    <property type="evidence" value="ECO:0007669"/>
    <property type="project" value="TreeGrafter"/>
</dbReference>
<dbReference type="FunFam" id="3.40.50.720:FF:000045">
    <property type="entry name" value="1-deoxy-D-xylulose 5-phosphate reductoisomerase"/>
    <property type="match status" value="1"/>
</dbReference>
<dbReference type="Gene3D" id="1.10.1740.10">
    <property type="match status" value="1"/>
</dbReference>
<dbReference type="Gene3D" id="3.40.50.720">
    <property type="entry name" value="NAD(P)-binding Rossmann-like Domain"/>
    <property type="match status" value="1"/>
</dbReference>
<dbReference type="HAMAP" id="MF_00183">
    <property type="entry name" value="DXP_reductoisom"/>
    <property type="match status" value="1"/>
</dbReference>
<dbReference type="InterPro" id="IPR003821">
    <property type="entry name" value="DXP_reductoisomerase"/>
</dbReference>
<dbReference type="InterPro" id="IPR013644">
    <property type="entry name" value="DXP_reductoisomerase_C"/>
</dbReference>
<dbReference type="InterPro" id="IPR013512">
    <property type="entry name" value="DXP_reductoisomerase_N"/>
</dbReference>
<dbReference type="InterPro" id="IPR026877">
    <property type="entry name" value="DXPR_C"/>
</dbReference>
<dbReference type="InterPro" id="IPR036169">
    <property type="entry name" value="DXPR_C_sf"/>
</dbReference>
<dbReference type="InterPro" id="IPR036291">
    <property type="entry name" value="NAD(P)-bd_dom_sf"/>
</dbReference>
<dbReference type="NCBIfam" id="TIGR00243">
    <property type="entry name" value="Dxr"/>
    <property type="match status" value="1"/>
</dbReference>
<dbReference type="PANTHER" id="PTHR30525">
    <property type="entry name" value="1-DEOXY-D-XYLULOSE 5-PHOSPHATE REDUCTOISOMERASE"/>
    <property type="match status" value="1"/>
</dbReference>
<dbReference type="PANTHER" id="PTHR30525:SF0">
    <property type="entry name" value="1-DEOXY-D-XYLULOSE 5-PHOSPHATE REDUCTOISOMERASE, CHLOROPLASTIC"/>
    <property type="match status" value="1"/>
</dbReference>
<dbReference type="Pfam" id="PF08436">
    <property type="entry name" value="DXP_redisom_C"/>
    <property type="match status" value="1"/>
</dbReference>
<dbReference type="Pfam" id="PF02670">
    <property type="entry name" value="DXP_reductoisom"/>
    <property type="match status" value="1"/>
</dbReference>
<dbReference type="Pfam" id="PF13288">
    <property type="entry name" value="DXPR_C"/>
    <property type="match status" value="1"/>
</dbReference>
<dbReference type="PIRSF" id="PIRSF006205">
    <property type="entry name" value="Dxp_reductismrs"/>
    <property type="match status" value="1"/>
</dbReference>
<dbReference type="SUPFAM" id="SSF69055">
    <property type="entry name" value="1-deoxy-D-xylulose-5-phosphate reductoisomerase, C-terminal domain"/>
    <property type="match status" value="1"/>
</dbReference>
<dbReference type="SUPFAM" id="SSF55347">
    <property type="entry name" value="Glyceraldehyde-3-phosphate dehydrogenase-like, C-terminal domain"/>
    <property type="match status" value="1"/>
</dbReference>
<dbReference type="SUPFAM" id="SSF51735">
    <property type="entry name" value="NAD(P)-binding Rossmann-fold domains"/>
    <property type="match status" value="1"/>
</dbReference>
<reference key="1">
    <citation type="journal article" date="2008" name="Mol. Biol. Evol.">
        <title>Genome evolution of Wolbachia strain wPip from the Culex pipiens group.</title>
        <authorList>
            <person name="Klasson L."/>
            <person name="Walker T."/>
            <person name="Sebaihia M."/>
            <person name="Sanders M.J."/>
            <person name="Quail M.A."/>
            <person name="Lord A."/>
            <person name="Sanders S."/>
            <person name="Earl J."/>
            <person name="O'Neill S.L."/>
            <person name="Thomson N."/>
            <person name="Sinkins S.P."/>
            <person name="Parkhill J."/>
        </authorList>
    </citation>
    <scope>NUCLEOTIDE SEQUENCE [LARGE SCALE GENOMIC DNA]</scope>
    <source>
        <strain>wPip</strain>
    </source>
</reference>
<proteinExistence type="inferred from homology"/>
<comment type="function">
    <text evidence="1">Catalyzes the NADPH-dependent rearrangement and reduction of 1-deoxy-D-xylulose-5-phosphate (DXP) to 2-C-methyl-D-erythritol 4-phosphate (MEP).</text>
</comment>
<comment type="catalytic activity">
    <reaction evidence="1">
        <text>2-C-methyl-D-erythritol 4-phosphate + NADP(+) = 1-deoxy-D-xylulose 5-phosphate + NADPH + H(+)</text>
        <dbReference type="Rhea" id="RHEA:13717"/>
        <dbReference type="ChEBI" id="CHEBI:15378"/>
        <dbReference type="ChEBI" id="CHEBI:57783"/>
        <dbReference type="ChEBI" id="CHEBI:57792"/>
        <dbReference type="ChEBI" id="CHEBI:58262"/>
        <dbReference type="ChEBI" id="CHEBI:58349"/>
        <dbReference type="EC" id="1.1.1.267"/>
    </reaction>
    <physiologicalReaction direction="right-to-left" evidence="1">
        <dbReference type="Rhea" id="RHEA:13719"/>
    </physiologicalReaction>
</comment>
<comment type="cofactor">
    <cofactor evidence="1">
        <name>Mg(2+)</name>
        <dbReference type="ChEBI" id="CHEBI:18420"/>
    </cofactor>
    <cofactor evidence="1">
        <name>Mn(2+)</name>
        <dbReference type="ChEBI" id="CHEBI:29035"/>
    </cofactor>
</comment>
<comment type="pathway">
    <text evidence="1">Isoprenoid biosynthesis; isopentenyl diphosphate biosynthesis via DXP pathway; isopentenyl diphosphate from 1-deoxy-D-xylulose 5-phosphate: step 1/6.</text>
</comment>
<comment type="similarity">
    <text evidence="1">Belongs to the DXR family.</text>
</comment>
<name>DXR_WOLPP</name>
<gene>
    <name evidence="1" type="primary">dxr</name>
    <name type="ordered locus">WP0113</name>
</gene>
<evidence type="ECO:0000255" key="1">
    <source>
        <dbReference type="HAMAP-Rule" id="MF_00183"/>
    </source>
</evidence>
<sequence>MKKVSVLGSTGSIGKKTVDLLLKRKEEYQVEALSANSNFALLAQQANLLNAKYAAISDERFYKDLKEDLLGTNVKVEVGAPGLANVASLPVDLSVIAIVGIAGLEPVIKVIESGTKVIALANKESIVCGGKLLLKKAKERSVQIIPIDSEHNAIFQVLQNDDKCVEKIILTASGGPFLNYSLEQLRNITVNQALSHPTWKMGKKISVDSATMMNKALEIIEAHHLFKISPNRIEAVVHPESIVHGVVVYQDGFSFAVLAETDMEIPIAYALSWPERSTLNYKLDLTKQKKLTFQEPDHKCFSSLKLSMEVLNSSSPHTNSIVLNAANEIAVNEFLKSRIGFLEVVEVVKSTIENFDKYSDINSLSDIISVDFESRILANEIIKSKGICSVE</sequence>
<feature type="chain" id="PRO_1000098525" description="1-deoxy-D-xylulose 5-phosphate reductoisomerase">
    <location>
        <begin position="1"/>
        <end position="391"/>
    </location>
</feature>
<feature type="binding site" evidence="1">
    <location>
        <position position="10"/>
    </location>
    <ligand>
        <name>NADPH</name>
        <dbReference type="ChEBI" id="CHEBI:57783"/>
    </ligand>
</feature>
<feature type="binding site" evidence="1">
    <location>
        <position position="11"/>
    </location>
    <ligand>
        <name>NADPH</name>
        <dbReference type="ChEBI" id="CHEBI:57783"/>
    </ligand>
</feature>
<feature type="binding site" evidence="1">
    <location>
        <position position="12"/>
    </location>
    <ligand>
        <name>NADPH</name>
        <dbReference type="ChEBI" id="CHEBI:57783"/>
    </ligand>
</feature>
<feature type="binding site" evidence="1">
    <location>
        <position position="13"/>
    </location>
    <ligand>
        <name>NADPH</name>
        <dbReference type="ChEBI" id="CHEBI:57783"/>
    </ligand>
</feature>
<feature type="binding site" evidence="1">
    <location>
        <position position="38"/>
    </location>
    <ligand>
        <name>NADPH</name>
        <dbReference type="ChEBI" id="CHEBI:57783"/>
    </ligand>
</feature>
<feature type="binding site" evidence="1">
    <location>
        <position position="122"/>
    </location>
    <ligand>
        <name>NADPH</name>
        <dbReference type="ChEBI" id="CHEBI:57783"/>
    </ligand>
</feature>
<feature type="binding site" evidence="1">
    <location>
        <position position="123"/>
    </location>
    <ligand>
        <name>1-deoxy-D-xylulose 5-phosphate</name>
        <dbReference type="ChEBI" id="CHEBI:57792"/>
    </ligand>
</feature>
<feature type="binding site" evidence="1">
    <location>
        <position position="124"/>
    </location>
    <ligand>
        <name>NADPH</name>
        <dbReference type="ChEBI" id="CHEBI:57783"/>
    </ligand>
</feature>
<feature type="binding site" evidence="1">
    <location>
        <position position="148"/>
    </location>
    <ligand>
        <name>Mn(2+)</name>
        <dbReference type="ChEBI" id="CHEBI:29035"/>
    </ligand>
</feature>
<feature type="binding site" evidence="1">
    <location>
        <position position="149"/>
    </location>
    <ligand>
        <name>1-deoxy-D-xylulose 5-phosphate</name>
        <dbReference type="ChEBI" id="CHEBI:57792"/>
    </ligand>
</feature>
<feature type="binding site" evidence="1">
    <location>
        <position position="150"/>
    </location>
    <ligand>
        <name>1-deoxy-D-xylulose 5-phosphate</name>
        <dbReference type="ChEBI" id="CHEBI:57792"/>
    </ligand>
</feature>
<feature type="binding site" evidence="1">
    <location>
        <position position="150"/>
    </location>
    <ligand>
        <name>Mn(2+)</name>
        <dbReference type="ChEBI" id="CHEBI:29035"/>
    </ligand>
</feature>
<feature type="binding site" evidence="1">
    <location>
        <position position="173"/>
    </location>
    <ligand>
        <name>1-deoxy-D-xylulose 5-phosphate</name>
        <dbReference type="ChEBI" id="CHEBI:57792"/>
    </ligand>
</feature>
<feature type="binding site" evidence="1">
    <location>
        <position position="196"/>
    </location>
    <ligand>
        <name>1-deoxy-D-xylulose 5-phosphate</name>
        <dbReference type="ChEBI" id="CHEBI:57792"/>
    </ligand>
</feature>
<feature type="binding site" evidence="1">
    <location>
        <position position="202"/>
    </location>
    <ligand>
        <name>NADPH</name>
        <dbReference type="ChEBI" id="CHEBI:57783"/>
    </ligand>
</feature>
<feature type="binding site" evidence="1">
    <location>
        <position position="209"/>
    </location>
    <ligand>
        <name>1-deoxy-D-xylulose 5-phosphate</name>
        <dbReference type="ChEBI" id="CHEBI:57792"/>
    </ligand>
</feature>
<feature type="binding site" evidence="1">
    <location>
        <position position="214"/>
    </location>
    <ligand>
        <name>1-deoxy-D-xylulose 5-phosphate</name>
        <dbReference type="ChEBI" id="CHEBI:57792"/>
    </ligand>
</feature>
<feature type="binding site" evidence="1">
    <location>
        <position position="215"/>
    </location>
    <ligand>
        <name>1-deoxy-D-xylulose 5-phosphate</name>
        <dbReference type="ChEBI" id="CHEBI:57792"/>
    </ligand>
</feature>
<feature type="binding site" evidence="1">
    <location>
        <position position="218"/>
    </location>
    <ligand>
        <name>1-deoxy-D-xylulose 5-phosphate</name>
        <dbReference type="ChEBI" id="CHEBI:57792"/>
    </ligand>
</feature>
<feature type="binding site" evidence="1">
    <location>
        <position position="218"/>
    </location>
    <ligand>
        <name>Mn(2+)</name>
        <dbReference type="ChEBI" id="CHEBI:29035"/>
    </ligand>
</feature>
<organism>
    <name type="scientific">Wolbachia pipientis subsp. Culex pipiens (strain wPip)</name>
    <dbReference type="NCBI Taxonomy" id="570417"/>
    <lineage>
        <taxon>Bacteria</taxon>
        <taxon>Pseudomonadati</taxon>
        <taxon>Pseudomonadota</taxon>
        <taxon>Alphaproteobacteria</taxon>
        <taxon>Rickettsiales</taxon>
        <taxon>Anaplasmataceae</taxon>
        <taxon>Wolbachieae</taxon>
        <taxon>Wolbachia</taxon>
    </lineage>
</organism>
<protein>
    <recommendedName>
        <fullName evidence="1">1-deoxy-D-xylulose 5-phosphate reductoisomerase</fullName>
        <shortName evidence="1">DXP reductoisomerase</shortName>
        <ecNumber evidence="1">1.1.1.267</ecNumber>
    </recommendedName>
    <alternativeName>
        <fullName evidence="1">1-deoxyxylulose-5-phosphate reductoisomerase</fullName>
    </alternativeName>
    <alternativeName>
        <fullName evidence="1">2-C-methyl-D-erythritol 4-phosphate synthase</fullName>
    </alternativeName>
</protein>
<accession>B3CN89</accession>